<name>RL9_CARHZ</name>
<organism>
    <name type="scientific">Carboxydothermus hydrogenoformans (strain ATCC BAA-161 / DSM 6008 / Z-2901)</name>
    <dbReference type="NCBI Taxonomy" id="246194"/>
    <lineage>
        <taxon>Bacteria</taxon>
        <taxon>Bacillati</taxon>
        <taxon>Bacillota</taxon>
        <taxon>Clostridia</taxon>
        <taxon>Thermoanaerobacterales</taxon>
        <taxon>Thermoanaerobacteraceae</taxon>
        <taxon>Carboxydothermus</taxon>
    </lineage>
</organism>
<gene>
    <name evidence="1" type="primary">rplI</name>
    <name type="ordered locus">CHY_0039</name>
</gene>
<accession>Q3AG23</accession>
<evidence type="ECO:0000255" key="1">
    <source>
        <dbReference type="HAMAP-Rule" id="MF_00503"/>
    </source>
</evidence>
<evidence type="ECO:0000305" key="2"/>
<proteinExistence type="inferred from homology"/>
<dbReference type="EMBL" id="CP000141">
    <property type="protein sequence ID" value="ABB14355.1"/>
    <property type="molecule type" value="Genomic_DNA"/>
</dbReference>
<dbReference type="RefSeq" id="WP_011342987.1">
    <property type="nucleotide sequence ID" value="NC_007503.1"/>
</dbReference>
<dbReference type="SMR" id="Q3AG23"/>
<dbReference type="FunCoup" id="Q3AG23">
    <property type="interactions" value="505"/>
</dbReference>
<dbReference type="STRING" id="246194.CHY_0039"/>
<dbReference type="KEGG" id="chy:CHY_0039"/>
<dbReference type="eggNOG" id="COG0359">
    <property type="taxonomic scope" value="Bacteria"/>
</dbReference>
<dbReference type="HOGENOM" id="CLU_078938_3_0_9"/>
<dbReference type="InParanoid" id="Q3AG23"/>
<dbReference type="OrthoDB" id="9788336at2"/>
<dbReference type="Proteomes" id="UP000002706">
    <property type="component" value="Chromosome"/>
</dbReference>
<dbReference type="GO" id="GO:1990904">
    <property type="term" value="C:ribonucleoprotein complex"/>
    <property type="evidence" value="ECO:0007669"/>
    <property type="project" value="UniProtKB-KW"/>
</dbReference>
<dbReference type="GO" id="GO:0005840">
    <property type="term" value="C:ribosome"/>
    <property type="evidence" value="ECO:0007669"/>
    <property type="project" value="UniProtKB-KW"/>
</dbReference>
<dbReference type="GO" id="GO:0019843">
    <property type="term" value="F:rRNA binding"/>
    <property type="evidence" value="ECO:0007669"/>
    <property type="project" value="UniProtKB-UniRule"/>
</dbReference>
<dbReference type="GO" id="GO:0003735">
    <property type="term" value="F:structural constituent of ribosome"/>
    <property type="evidence" value="ECO:0007669"/>
    <property type="project" value="InterPro"/>
</dbReference>
<dbReference type="GO" id="GO:0006412">
    <property type="term" value="P:translation"/>
    <property type="evidence" value="ECO:0007669"/>
    <property type="project" value="UniProtKB-UniRule"/>
</dbReference>
<dbReference type="FunFam" id="3.10.430.100:FF:000002">
    <property type="entry name" value="50S ribosomal protein L9"/>
    <property type="match status" value="1"/>
</dbReference>
<dbReference type="FunFam" id="3.40.5.10:FF:000002">
    <property type="entry name" value="50S ribosomal protein L9"/>
    <property type="match status" value="1"/>
</dbReference>
<dbReference type="Gene3D" id="3.10.430.100">
    <property type="entry name" value="Ribosomal protein L9, C-terminal domain"/>
    <property type="match status" value="1"/>
</dbReference>
<dbReference type="Gene3D" id="3.40.5.10">
    <property type="entry name" value="Ribosomal protein L9, N-terminal domain"/>
    <property type="match status" value="1"/>
</dbReference>
<dbReference type="HAMAP" id="MF_00503">
    <property type="entry name" value="Ribosomal_bL9"/>
    <property type="match status" value="1"/>
</dbReference>
<dbReference type="InterPro" id="IPR000244">
    <property type="entry name" value="Ribosomal_bL9"/>
</dbReference>
<dbReference type="InterPro" id="IPR009027">
    <property type="entry name" value="Ribosomal_bL9/RNase_H1_N"/>
</dbReference>
<dbReference type="InterPro" id="IPR020594">
    <property type="entry name" value="Ribosomal_bL9_bac/chp"/>
</dbReference>
<dbReference type="InterPro" id="IPR020069">
    <property type="entry name" value="Ribosomal_bL9_C"/>
</dbReference>
<dbReference type="InterPro" id="IPR036791">
    <property type="entry name" value="Ribosomal_bL9_C_sf"/>
</dbReference>
<dbReference type="InterPro" id="IPR020070">
    <property type="entry name" value="Ribosomal_bL9_N"/>
</dbReference>
<dbReference type="InterPro" id="IPR036935">
    <property type="entry name" value="Ribosomal_bL9_N_sf"/>
</dbReference>
<dbReference type="NCBIfam" id="TIGR00158">
    <property type="entry name" value="L9"/>
    <property type="match status" value="1"/>
</dbReference>
<dbReference type="PANTHER" id="PTHR21368">
    <property type="entry name" value="50S RIBOSOMAL PROTEIN L9"/>
    <property type="match status" value="1"/>
</dbReference>
<dbReference type="Pfam" id="PF03948">
    <property type="entry name" value="Ribosomal_L9_C"/>
    <property type="match status" value="1"/>
</dbReference>
<dbReference type="Pfam" id="PF01281">
    <property type="entry name" value="Ribosomal_L9_N"/>
    <property type="match status" value="1"/>
</dbReference>
<dbReference type="SUPFAM" id="SSF55658">
    <property type="entry name" value="L9 N-domain-like"/>
    <property type="match status" value="1"/>
</dbReference>
<dbReference type="SUPFAM" id="SSF55653">
    <property type="entry name" value="Ribosomal protein L9 C-domain"/>
    <property type="match status" value="1"/>
</dbReference>
<dbReference type="PROSITE" id="PS00651">
    <property type="entry name" value="RIBOSOMAL_L9"/>
    <property type="match status" value="1"/>
</dbReference>
<protein>
    <recommendedName>
        <fullName evidence="1">Large ribosomal subunit protein bL9</fullName>
    </recommendedName>
    <alternativeName>
        <fullName evidence="2">50S ribosomal protein L9</fullName>
    </alternativeName>
</protein>
<comment type="function">
    <text evidence="1">Binds to the 23S rRNA.</text>
</comment>
<comment type="similarity">
    <text evidence="1">Belongs to the bacterial ribosomal protein bL9 family.</text>
</comment>
<keyword id="KW-1185">Reference proteome</keyword>
<keyword id="KW-0687">Ribonucleoprotein</keyword>
<keyword id="KW-0689">Ribosomal protein</keyword>
<keyword id="KW-0694">RNA-binding</keyword>
<keyword id="KW-0699">rRNA-binding</keyword>
<sequence length="151" mass="16802">MKVILLTEVKKLGKKGDVVEVAEGYGRNYLIAKGLAVEATEGKLKELQQQKEAANRRKEKELQEARSLAEKLKNIELVLYGKGGENGKLFGAITSKDIAEALEKNYQIKIDKRKLDLKENIKALGVYTVEVKLHPEVTAKLKVAVKEEGRG</sequence>
<feature type="chain" id="PRO_0000236503" description="Large ribosomal subunit protein bL9">
    <location>
        <begin position="1"/>
        <end position="151"/>
    </location>
</feature>
<reference key="1">
    <citation type="journal article" date="2005" name="PLoS Genet.">
        <title>Life in hot carbon monoxide: the complete genome sequence of Carboxydothermus hydrogenoformans Z-2901.</title>
        <authorList>
            <person name="Wu M."/>
            <person name="Ren Q."/>
            <person name="Durkin A.S."/>
            <person name="Daugherty S.C."/>
            <person name="Brinkac L.M."/>
            <person name="Dodson R.J."/>
            <person name="Madupu R."/>
            <person name="Sullivan S.A."/>
            <person name="Kolonay J.F."/>
            <person name="Nelson W.C."/>
            <person name="Tallon L.J."/>
            <person name="Jones K.M."/>
            <person name="Ulrich L.E."/>
            <person name="Gonzalez J.M."/>
            <person name="Zhulin I.B."/>
            <person name="Robb F.T."/>
            <person name="Eisen J.A."/>
        </authorList>
    </citation>
    <scope>NUCLEOTIDE SEQUENCE [LARGE SCALE GENOMIC DNA]</scope>
    <source>
        <strain>ATCC BAA-161 / DSM 6008 / Z-2901</strain>
    </source>
</reference>